<keyword id="KW-0325">Glycoprotein</keyword>
<keyword id="KW-0472">Membrane</keyword>
<keyword id="KW-0503">Monooxygenase</keyword>
<keyword id="KW-0560">Oxidoreductase</keyword>
<keyword id="KW-1185">Reference proteome</keyword>
<keyword id="KW-0812">Transmembrane</keyword>
<keyword id="KW-1133">Transmembrane helix</keyword>
<dbReference type="EC" id="1.10.3.-" evidence="1"/>
<dbReference type="EMBL" id="BN001308">
    <property type="protein sequence ID" value="CBF90095.1"/>
    <property type="status" value="ALT_SEQ"/>
    <property type="molecule type" value="Genomic_DNA"/>
</dbReference>
<dbReference type="EMBL" id="AACD01000005">
    <property type="protein sequence ID" value="EAA66024.1"/>
    <property type="status" value="ALT_SEQ"/>
    <property type="molecule type" value="Genomic_DNA"/>
</dbReference>
<dbReference type="RefSeq" id="XP_657755.1">
    <property type="nucleotide sequence ID" value="XM_652663.1"/>
</dbReference>
<dbReference type="SMR" id="P9WEV9"/>
<dbReference type="GlyCosmos" id="P9WEV9">
    <property type="glycosylation" value="3 sites, No reported glycans"/>
</dbReference>
<dbReference type="GeneID" id="2875926"/>
<dbReference type="KEGG" id="ani:ANIA_10022"/>
<dbReference type="InParanoid" id="P9WEV9"/>
<dbReference type="OrthoDB" id="3454835at2759"/>
<dbReference type="Proteomes" id="UP000000560">
    <property type="component" value="Chromosome VIII"/>
</dbReference>
<dbReference type="GO" id="GO:0016020">
    <property type="term" value="C:membrane"/>
    <property type="evidence" value="ECO:0007669"/>
    <property type="project" value="UniProtKB-SubCell"/>
</dbReference>
<dbReference type="GO" id="GO:0004497">
    <property type="term" value="F:monooxygenase activity"/>
    <property type="evidence" value="ECO:0007669"/>
    <property type="project" value="UniProtKB-KW"/>
</dbReference>
<dbReference type="InterPro" id="IPR013901">
    <property type="entry name" value="Anthrone_oxy"/>
</dbReference>
<dbReference type="PANTHER" id="PTHR35042">
    <property type="entry name" value="ANTHRONE OXYGENASE ENCC"/>
    <property type="match status" value="1"/>
</dbReference>
<dbReference type="PANTHER" id="PTHR35042:SF3">
    <property type="entry name" value="ANTHRONE OXYGENASE-RELATED"/>
    <property type="match status" value="1"/>
</dbReference>
<dbReference type="Pfam" id="PF08592">
    <property type="entry name" value="Anthrone_oxy"/>
    <property type="match status" value="1"/>
</dbReference>
<protein>
    <recommendedName>
        <fullName evidence="1">Anthrone oxygenase</fullName>
        <ecNumber evidence="1">1.10.3.-</ecNumber>
    </recommendedName>
    <alternativeName>
        <fullName evidence="8">Monodictyphenone synthesis protein H-2</fullName>
    </alternativeName>
</protein>
<gene>
    <name evidence="8" type="primary">mdpH-2</name>
    <name type="ORF">ANIA_10022</name>
</gene>
<name>MDPH2_EMENI</name>
<organism>
    <name type="scientific">Emericella nidulans (strain FGSC A4 / ATCC 38163 / CBS 112.46 / NRRL 194 / M139)</name>
    <name type="common">Aspergillus nidulans</name>
    <dbReference type="NCBI Taxonomy" id="227321"/>
    <lineage>
        <taxon>Eukaryota</taxon>
        <taxon>Fungi</taxon>
        <taxon>Dikarya</taxon>
        <taxon>Ascomycota</taxon>
        <taxon>Pezizomycotina</taxon>
        <taxon>Eurotiomycetes</taxon>
        <taxon>Eurotiomycetidae</taxon>
        <taxon>Eurotiales</taxon>
        <taxon>Aspergillaceae</taxon>
        <taxon>Aspergillus</taxon>
        <taxon>Aspergillus subgen. Nidulantes</taxon>
    </lineage>
</organism>
<evidence type="ECO:0000250" key="1">
    <source>
        <dbReference type="UniProtKB" id="P0DOB2"/>
    </source>
</evidence>
<evidence type="ECO:0000250" key="2">
    <source>
        <dbReference type="UniProtKB" id="Q0CCY3"/>
    </source>
</evidence>
<evidence type="ECO:0000255" key="3"/>
<evidence type="ECO:0000255" key="4">
    <source>
        <dbReference type="PROSITE-ProRule" id="PRU00498"/>
    </source>
</evidence>
<evidence type="ECO:0000269" key="5">
    <source>
    </source>
</evidence>
<evidence type="ECO:0000269" key="6">
    <source>
    </source>
</evidence>
<evidence type="ECO:0000269" key="7">
    <source>
    </source>
</evidence>
<evidence type="ECO:0000303" key="8">
    <source>
    </source>
</evidence>
<evidence type="ECO:0000305" key="9"/>
<feature type="chain" id="PRO_0000450871" description="Anthrone oxygenase">
    <location>
        <begin position="1"/>
        <end position="192"/>
    </location>
</feature>
<feature type="transmembrane region" description="Helical" evidence="3">
    <location>
        <begin position="12"/>
        <end position="32"/>
    </location>
</feature>
<feature type="transmembrane region" description="Helical" evidence="3">
    <location>
        <begin position="54"/>
        <end position="74"/>
    </location>
</feature>
<feature type="transmembrane region" description="Helical" evidence="3">
    <location>
        <begin position="86"/>
        <end position="106"/>
    </location>
</feature>
<feature type="transmembrane region" description="Helical" evidence="3">
    <location>
        <begin position="172"/>
        <end position="192"/>
    </location>
</feature>
<feature type="glycosylation site" description="N-linked (GlcNAc...) asparagine" evidence="4">
    <location>
        <position position="130"/>
    </location>
</feature>
<feature type="glycosylation site" description="N-linked (GlcNAc...) asparagine" evidence="4">
    <location>
        <position position="138"/>
    </location>
</feature>
<feature type="glycosylation site" description="N-linked (GlcNAc...) asparagine" evidence="4">
    <location>
        <position position="147"/>
    </location>
</feature>
<reference key="1">
    <citation type="journal article" date="2005" name="Nature">
        <title>Sequencing of Aspergillus nidulans and comparative analysis with A. fumigatus and A. oryzae.</title>
        <authorList>
            <person name="Galagan J.E."/>
            <person name="Calvo S.E."/>
            <person name="Cuomo C."/>
            <person name="Ma L.-J."/>
            <person name="Wortman J.R."/>
            <person name="Batzoglou S."/>
            <person name="Lee S.-I."/>
            <person name="Bastuerkmen M."/>
            <person name="Spevak C.C."/>
            <person name="Clutterbuck J."/>
            <person name="Kapitonov V."/>
            <person name="Jurka J."/>
            <person name="Scazzocchio C."/>
            <person name="Farman M.L."/>
            <person name="Butler J."/>
            <person name="Purcell S."/>
            <person name="Harris S."/>
            <person name="Braus G.H."/>
            <person name="Draht O."/>
            <person name="Busch S."/>
            <person name="D'Enfert C."/>
            <person name="Bouchier C."/>
            <person name="Goldman G.H."/>
            <person name="Bell-Pedersen D."/>
            <person name="Griffiths-Jones S."/>
            <person name="Doonan J.H."/>
            <person name="Yu J."/>
            <person name="Vienken K."/>
            <person name="Pain A."/>
            <person name="Freitag M."/>
            <person name="Selker E.U."/>
            <person name="Archer D.B."/>
            <person name="Penalva M.A."/>
            <person name="Oakley B.R."/>
            <person name="Momany M."/>
            <person name="Tanaka T."/>
            <person name="Kumagai T."/>
            <person name="Asai K."/>
            <person name="Machida M."/>
            <person name="Nierman W.C."/>
            <person name="Denning D.W."/>
            <person name="Caddick M.X."/>
            <person name="Hynes M."/>
            <person name="Paoletti M."/>
            <person name="Fischer R."/>
            <person name="Miller B.L."/>
            <person name="Dyer P.S."/>
            <person name="Sachs M.S."/>
            <person name="Osmani S.A."/>
            <person name="Birren B.W."/>
        </authorList>
    </citation>
    <scope>NUCLEOTIDE SEQUENCE [LARGE SCALE GENOMIC DNA]</scope>
    <source>
        <strain>FGSC A4 / ATCC 38163 / CBS 112.46 / NRRL 194 / M139</strain>
    </source>
</reference>
<reference key="2">
    <citation type="journal article" date="2009" name="Fungal Genet. Biol.">
        <title>The 2008 update of the Aspergillus nidulans genome annotation: a community effort.</title>
        <authorList>
            <person name="Wortman J.R."/>
            <person name="Gilsenan J.M."/>
            <person name="Joardar V."/>
            <person name="Deegan J."/>
            <person name="Clutterbuck J."/>
            <person name="Andersen M.R."/>
            <person name="Archer D."/>
            <person name="Bencina M."/>
            <person name="Braus G."/>
            <person name="Coutinho P."/>
            <person name="von Dohren H."/>
            <person name="Doonan J."/>
            <person name="Driessen A.J."/>
            <person name="Durek P."/>
            <person name="Espeso E."/>
            <person name="Fekete E."/>
            <person name="Flipphi M."/>
            <person name="Estrada C.G."/>
            <person name="Geysens S."/>
            <person name="Goldman G."/>
            <person name="de Groot P.W."/>
            <person name="Hansen K."/>
            <person name="Harris S.D."/>
            <person name="Heinekamp T."/>
            <person name="Helmstaedt K."/>
            <person name="Henrissat B."/>
            <person name="Hofmann G."/>
            <person name="Homan T."/>
            <person name="Horio T."/>
            <person name="Horiuchi H."/>
            <person name="James S."/>
            <person name="Jones M."/>
            <person name="Karaffa L."/>
            <person name="Karanyi Z."/>
            <person name="Kato M."/>
            <person name="Keller N."/>
            <person name="Kelly D.E."/>
            <person name="Kiel J.A."/>
            <person name="Kim J.M."/>
            <person name="van der Klei I.J."/>
            <person name="Klis F.M."/>
            <person name="Kovalchuk A."/>
            <person name="Krasevec N."/>
            <person name="Kubicek C.P."/>
            <person name="Liu B."/>
            <person name="Maccabe A."/>
            <person name="Meyer V."/>
            <person name="Mirabito P."/>
            <person name="Miskei M."/>
            <person name="Mos M."/>
            <person name="Mullins J."/>
            <person name="Nelson D.R."/>
            <person name="Nielsen J."/>
            <person name="Oakley B.R."/>
            <person name="Osmani S.A."/>
            <person name="Pakula T."/>
            <person name="Paszewski A."/>
            <person name="Paulsen I."/>
            <person name="Pilsyk S."/>
            <person name="Pocsi I."/>
            <person name="Punt P.J."/>
            <person name="Ram A.F."/>
            <person name="Ren Q."/>
            <person name="Robellet X."/>
            <person name="Robson G."/>
            <person name="Seiboth B."/>
            <person name="van Solingen P."/>
            <person name="Specht T."/>
            <person name="Sun J."/>
            <person name="Taheri-Talesh N."/>
            <person name="Takeshita N."/>
            <person name="Ussery D."/>
            <person name="vanKuyk P.A."/>
            <person name="Visser H."/>
            <person name="van de Vondervoort P.J."/>
            <person name="de Vries R.P."/>
            <person name="Walton J."/>
            <person name="Xiang X."/>
            <person name="Xiong Y."/>
            <person name="Zeng A.P."/>
            <person name="Brandt B.W."/>
            <person name="Cornell M.J."/>
            <person name="van den Hondel C.A."/>
            <person name="Visser J."/>
            <person name="Oliver S.G."/>
            <person name="Turner G."/>
        </authorList>
    </citation>
    <scope>GENOME REANNOTATION</scope>
    <source>
        <strain>FGSC A4 / ATCC 38163 / CBS 112.46 / NRRL 194 / M139</strain>
    </source>
</reference>
<reference key="3">
    <citation type="journal article" date="2010" name="Appl. Environ. Microbiol.">
        <title>Characterization of the Aspergillus nidulans monodictyphenone gene cluster.</title>
        <authorList>
            <person name="Chiang Y.M."/>
            <person name="Szewczyk E."/>
            <person name="Davidson A.D."/>
            <person name="Entwistle R."/>
            <person name="Keller N.P."/>
            <person name="Wang C.C."/>
            <person name="Oakley B.R."/>
        </authorList>
    </citation>
    <scope>FUNCTION</scope>
    <scope>DISRUPTION PHENOTYPE</scope>
    <scope>PATHWAY</scope>
</reference>
<reference key="4">
    <citation type="journal article" date="2011" name="J. Am. Chem. Soc.">
        <title>Genome-based deletion analysis reveals the prenyl xanthone biosynthesis pathway in Aspergillus nidulans.</title>
        <authorList>
            <person name="Sanchez J.F."/>
            <person name="Entwistle R."/>
            <person name="Hung J.H."/>
            <person name="Yaegashi J."/>
            <person name="Jain S."/>
            <person name="Chiang Y.M."/>
            <person name="Wang C.C."/>
            <person name="Oakley B.R."/>
        </authorList>
    </citation>
    <scope>FUNCTION</scope>
    <scope>DISRUPTION PHENOTYPE</scope>
    <scope>PATHWAY</scope>
</reference>
<reference key="5">
    <citation type="journal article" date="2012" name="ChemBioChem">
        <title>Genetic and biosynthetic studies of the fungal prenylated xanthone shamixanthone and related metabolites in Aspergillus spp. revisited.</title>
        <authorList>
            <person name="Simpson T.J."/>
        </authorList>
    </citation>
    <scope>FUNCTION</scope>
</reference>
<sequence length="192" mass="20918">MASLTTLKNTAIVTGSFLSGAMITLSTITVPVLLETSTHPPQLLHQWVRTYHYGHISLPTISIATAILYFYIAAYQGAREQPWRKAALVGFLTIVMVPFTWIVMSSTNGMLFGLEAGNRDHSQFFEQGANRSGLKGANSSQSHGLGNVSVGIGVEMATLEGVRELLVRWKWMHLVRSLFPLMAAVLGVGICV</sequence>
<accession>P9WEV9</accession>
<accession>C8VQ65</accession>
<accession>Q5BH29</accession>
<comment type="function">
    <text evidence="2 5 6 7">Anthrone oxygenase; part of the gene cluster that mediates the biosynthesis of monodictyphenone, a prenyl xanthone derivative (PubMed:20139316, PubMed:21351751, PubMed:22730213). The pathway begins with the synthesis of atrochrysone thioester by the polyketide synthase (PKS) mdpG (PubMed:20139316). The atrochrysone carboxyl ACP thioesterase mdpF then breaks the thioester bond and releases the atrochrysone carboxylic acid from mdpG (PubMed:20139316). The atrochrysone carboxylic acid is then converted to atrochrysone which is further transformed into emodin anthrone by mdpH-1 and mdpH-2 (PubMed:20139316). Emodin is further modified to yield monodictyphenone via several steps involving mdpB, mdpC mdpJ, mdpK and mdpL (PubMed:20139316, PubMed:21351751). These enzymes with xptA, xptB and xptC are also proposed to be involved in the synthesis of shamixanthone from emodin (PubMed:22730213). Especially, direct reduction of emodin by the short chain dehydrogenase mdpC followed by dehydration catalyzed by the scytalone dehydratase-like protein mdpB gives loss of oxygen and formation of chrysophanol intermediate in two simple steps (PubMed:22730213).</text>
</comment>
<comment type="catalytic activity">
    <reaction evidence="1">
        <text>emodin anthrone + O2 = emodin + H2O + H(+)</text>
        <dbReference type="Rhea" id="RHEA:64268"/>
        <dbReference type="ChEBI" id="CHEBI:15377"/>
        <dbReference type="ChEBI" id="CHEBI:15378"/>
        <dbReference type="ChEBI" id="CHEBI:15379"/>
        <dbReference type="ChEBI" id="CHEBI:77659"/>
        <dbReference type="ChEBI" id="CHEBI:150013"/>
    </reaction>
    <physiologicalReaction direction="left-to-right" evidence="1">
        <dbReference type="Rhea" id="RHEA:64269"/>
    </physiologicalReaction>
</comment>
<comment type="pathway">
    <text evidence="5 6">Secondary metabolite biosynthesis.</text>
</comment>
<comment type="subcellular location">
    <subcellularLocation>
        <location evidence="3">Membrane</location>
        <topology evidence="3">Multi-pass membrane protein</topology>
    </subcellularLocation>
</comment>
<comment type="disruption phenotype">
    <text evidence="5 6">Impairs the production of monodictyphenone, but leads to the accumulation of endocrocin (PubMed:20139316, PubMed:21351751).</text>
</comment>
<comment type="similarity">
    <text evidence="9">Belongs to the anthrone oxygenase family.</text>
</comment>
<comment type="sequence caution" evidence="9">
    <conflict type="erroneous gene model prediction">
        <sequence resource="EMBL-CDS" id="CBF90095"/>
    </conflict>
    <text>The predicted gene ANIA_10022 has been split into 2 genes: mdpH-1 and mdpH-2.</text>
</comment>
<comment type="sequence caution" evidence="9">
    <conflict type="erroneous gene model prediction">
        <sequence resource="EMBL-CDS" id="EAA66024"/>
    </conflict>
    <text>The predicted gene AN0151 has been split into 2 genes: ANIA_10022 and ANIA_10035. ANIA_10022 has been further split into mdpH-1 and mdpH-2.</text>
</comment>
<proteinExistence type="inferred from homology"/>